<feature type="chain" id="PRO_0000109472" description="tRNA-splicing endonuclease">
    <location>
        <begin position="1"/>
        <end position="177"/>
    </location>
</feature>
<feature type="active site" evidence="1">
    <location>
        <position position="114"/>
    </location>
</feature>
<feature type="active site" evidence="1">
    <location>
        <position position="123"/>
    </location>
</feature>
<feature type="active site" evidence="1">
    <location>
        <position position="154"/>
    </location>
</feature>
<proteinExistence type="inferred from homology"/>
<evidence type="ECO:0000255" key="1">
    <source>
        <dbReference type="HAMAP-Rule" id="MF_01833"/>
    </source>
</evidence>
<accession>Q6LY59</accession>
<dbReference type="EC" id="4.6.1.16" evidence="1"/>
<dbReference type="EMBL" id="BX950229">
    <property type="protein sequence ID" value="CAF30688.1"/>
    <property type="molecule type" value="Genomic_DNA"/>
</dbReference>
<dbReference type="RefSeq" id="WP_011171076.1">
    <property type="nucleotide sequence ID" value="NC_005791.1"/>
</dbReference>
<dbReference type="SMR" id="Q6LY59"/>
<dbReference type="STRING" id="267377.MMP1132"/>
<dbReference type="EnsemblBacteria" id="CAF30688">
    <property type="protein sequence ID" value="CAF30688"/>
    <property type="gene ID" value="MMP1132"/>
</dbReference>
<dbReference type="GeneID" id="41279717"/>
<dbReference type="KEGG" id="mmp:MMP1132"/>
<dbReference type="PATRIC" id="fig|267377.15.peg.1165"/>
<dbReference type="eggNOG" id="arCOG01701">
    <property type="taxonomic scope" value="Archaea"/>
</dbReference>
<dbReference type="HOGENOM" id="CLU_114393_0_0_2"/>
<dbReference type="OrthoDB" id="46045at2157"/>
<dbReference type="Proteomes" id="UP000000590">
    <property type="component" value="Chromosome"/>
</dbReference>
<dbReference type="GO" id="GO:0005737">
    <property type="term" value="C:cytoplasm"/>
    <property type="evidence" value="ECO:0007669"/>
    <property type="project" value="TreeGrafter"/>
</dbReference>
<dbReference type="GO" id="GO:0016829">
    <property type="term" value="F:lyase activity"/>
    <property type="evidence" value="ECO:0007669"/>
    <property type="project" value="UniProtKB-KW"/>
</dbReference>
<dbReference type="GO" id="GO:0003676">
    <property type="term" value="F:nucleic acid binding"/>
    <property type="evidence" value="ECO:0007669"/>
    <property type="project" value="InterPro"/>
</dbReference>
<dbReference type="GO" id="GO:0000213">
    <property type="term" value="F:tRNA-intron endonuclease activity"/>
    <property type="evidence" value="ECO:0007669"/>
    <property type="project" value="UniProtKB-UniRule"/>
</dbReference>
<dbReference type="GO" id="GO:0006388">
    <property type="term" value="P:tRNA splicing, via endonucleolytic cleavage and ligation"/>
    <property type="evidence" value="ECO:0007669"/>
    <property type="project" value="UniProtKB-UniRule"/>
</dbReference>
<dbReference type="CDD" id="cd22363">
    <property type="entry name" value="tRNA-intron_lyase_C"/>
    <property type="match status" value="1"/>
</dbReference>
<dbReference type="FunFam" id="3.40.1350.10:FF:000006">
    <property type="entry name" value="tRNA-splicing endonuclease"/>
    <property type="match status" value="1"/>
</dbReference>
<dbReference type="Gene3D" id="3.40.1350.10">
    <property type="match status" value="1"/>
</dbReference>
<dbReference type="Gene3D" id="3.40.1170.20">
    <property type="entry name" value="tRNA intron endonuclease, N-terminal domain"/>
    <property type="match status" value="1"/>
</dbReference>
<dbReference type="HAMAP" id="MF_01833">
    <property type="entry name" value="EndA_short"/>
    <property type="match status" value="1"/>
</dbReference>
<dbReference type="InterPro" id="IPR011856">
    <property type="entry name" value="tRNA_endonuc-like_dom_sf"/>
</dbReference>
<dbReference type="InterPro" id="IPR036167">
    <property type="entry name" value="tRNA_intron_Endo_cat-like_sf"/>
</dbReference>
<dbReference type="InterPro" id="IPR006677">
    <property type="entry name" value="tRNA_intron_Endonuc_cat-like"/>
</dbReference>
<dbReference type="InterPro" id="IPR006678">
    <property type="entry name" value="tRNA_intron_Endonuc_N"/>
</dbReference>
<dbReference type="InterPro" id="IPR036740">
    <property type="entry name" value="tRNA_intron_Endonuc_N_sf"/>
</dbReference>
<dbReference type="InterPro" id="IPR006676">
    <property type="entry name" value="tRNA_splic"/>
</dbReference>
<dbReference type="InterPro" id="IPR016442">
    <property type="entry name" value="tRNA_splic_arch_short"/>
</dbReference>
<dbReference type="NCBIfam" id="TIGR00324">
    <property type="entry name" value="endA"/>
    <property type="match status" value="1"/>
</dbReference>
<dbReference type="PANTHER" id="PTHR21227">
    <property type="entry name" value="TRNA-SPLICING ENDONUCLEASE SUBUNIT SEN2"/>
    <property type="match status" value="1"/>
</dbReference>
<dbReference type="PANTHER" id="PTHR21227:SF0">
    <property type="entry name" value="TRNA-SPLICING ENDONUCLEASE SUBUNIT SEN2"/>
    <property type="match status" value="1"/>
</dbReference>
<dbReference type="Pfam" id="PF01974">
    <property type="entry name" value="tRNA_int_endo"/>
    <property type="match status" value="1"/>
</dbReference>
<dbReference type="Pfam" id="PF02778">
    <property type="entry name" value="tRNA_int_endo_N"/>
    <property type="match status" value="1"/>
</dbReference>
<dbReference type="PIRSF" id="PIRSF005285">
    <property type="entry name" value="tRNA_splic_archaea"/>
    <property type="match status" value="1"/>
</dbReference>
<dbReference type="SUPFAM" id="SSF53032">
    <property type="entry name" value="tRNA-intron endonuclease catalytic domain-like"/>
    <property type="match status" value="1"/>
</dbReference>
<dbReference type="SUPFAM" id="SSF55267">
    <property type="entry name" value="tRNA-intron endonuclease N-terminal domain-like"/>
    <property type="match status" value="1"/>
</dbReference>
<gene>
    <name evidence="1" type="primary">endA</name>
    <name type="ordered locus">MMP1132</name>
</gene>
<comment type="function">
    <text evidence="1">Endonuclease that removes tRNA introns. Cleaves pre-tRNA at the 5'- and 3'-splice sites to release the intron. The products are an intron and two tRNA half-molecules bearing 2',3' cyclic phosphate and 5'-OH termini. Recognizes a pseudosymmetric substrate in which 2 bulged loops of 3 bases are separated by a stem of 4 bp.</text>
</comment>
<comment type="catalytic activity">
    <reaction evidence="1">
        <text>pretRNA = a 3'-half-tRNA molecule with a 5'-OH end + a 5'-half-tRNA molecule with a 2',3'-cyclic phosphate end + an intron with a 2',3'-cyclic phosphate and a 5'-hydroxyl terminus.</text>
        <dbReference type="EC" id="4.6.1.16"/>
    </reaction>
</comment>
<comment type="subunit">
    <text evidence="1">Homotetramer; although the tetramer contains four active sites, only two participate in the cleavage. Therefore, it should be considered as a dimer of dimers.</text>
</comment>
<comment type="similarity">
    <text evidence="1">Belongs to the tRNA-intron endonuclease family. Archaeal short subfamily.</text>
</comment>
<keyword id="KW-0456">Lyase</keyword>
<keyword id="KW-1185">Reference proteome</keyword>
<keyword id="KW-0819">tRNA processing</keyword>
<reference key="1">
    <citation type="journal article" date="2004" name="J. Bacteriol.">
        <title>Complete genome sequence of the genetically tractable hydrogenotrophic methanogen Methanococcus maripaludis.</title>
        <authorList>
            <person name="Hendrickson E.L."/>
            <person name="Kaul R."/>
            <person name="Zhou Y."/>
            <person name="Bovee D."/>
            <person name="Chapman P."/>
            <person name="Chung J."/>
            <person name="Conway de Macario E."/>
            <person name="Dodsworth J.A."/>
            <person name="Gillett W."/>
            <person name="Graham D.E."/>
            <person name="Hackett M."/>
            <person name="Haydock A.K."/>
            <person name="Kang A."/>
            <person name="Land M.L."/>
            <person name="Levy R."/>
            <person name="Lie T.J."/>
            <person name="Major T.A."/>
            <person name="Moore B.C."/>
            <person name="Porat I."/>
            <person name="Palmeiri A."/>
            <person name="Rouse G."/>
            <person name="Saenphimmachak C."/>
            <person name="Soell D."/>
            <person name="Van Dien S."/>
            <person name="Wang T."/>
            <person name="Whitman W.B."/>
            <person name="Xia Q."/>
            <person name="Zhang Y."/>
            <person name="Larimer F.W."/>
            <person name="Olson M.V."/>
            <person name="Leigh J.A."/>
        </authorList>
    </citation>
    <scope>NUCLEOTIDE SEQUENCE [LARGE SCALE GENOMIC DNA]</scope>
    <source>
        <strain>DSM 14266 / JCM 13030 / NBRC 101832 / S2 / LL</strain>
    </source>
</reference>
<sequence length="177" mass="20731">MMAKPKKTIPAKLSDERIVIYDKDGISRLNEKRYGELHENFLSLSFVEGLYLVSKNWISLRDKNKKLLSFEELFDVAQNIDRKLCIRYLAYKDLRNRGYTVRTGLKYGSDFRLYERSNIDEIHSRYLVKVFSEEIPCEISEITGFVRVAHSVRKELIIAIVDADGSVVYYNMGYLKL</sequence>
<protein>
    <recommendedName>
        <fullName evidence="1">tRNA-splicing endonuclease</fullName>
        <ecNumber evidence="1">4.6.1.16</ecNumber>
    </recommendedName>
    <alternativeName>
        <fullName evidence="1">tRNA-intron endonuclease</fullName>
    </alternativeName>
</protein>
<name>ENDA_METMP</name>
<organism>
    <name type="scientific">Methanococcus maripaludis (strain DSM 14266 / JCM 13030 / NBRC 101832 / S2 / LL)</name>
    <dbReference type="NCBI Taxonomy" id="267377"/>
    <lineage>
        <taxon>Archaea</taxon>
        <taxon>Methanobacteriati</taxon>
        <taxon>Methanobacteriota</taxon>
        <taxon>Methanomada group</taxon>
        <taxon>Methanococci</taxon>
        <taxon>Methanococcales</taxon>
        <taxon>Methanococcaceae</taxon>
        <taxon>Methanococcus</taxon>
    </lineage>
</organism>